<comment type="function">
    <text evidence="2 4 5">Component of a complex that catalyzes the reversible migration of the omega amino group of D-ornithine to C-4 to form (2R,4S)-2,4-diaminopentanoic acid. OraE may be the catalytic subunit. Active only on D-ornithine and 2,4-diaminopentanoic acid but not active on L-ornithine, L-beta-lysine, L-alpha-lysine or D-alpha-lysine.</text>
</comment>
<comment type="catalytic activity">
    <reaction evidence="2 4 5">
        <text>D-ornithine = (2R,4S)-2,4-diaminopentanoate</text>
        <dbReference type="Rhea" id="RHEA:14893"/>
        <dbReference type="ChEBI" id="CHEBI:57668"/>
        <dbReference type="ChEBI" id="CHEBI:58697"/>
        <dbReference type="EC" id="5.4.3.5"/>
    </reaction>
</comment>
<comment type="cofactor">
    <cofactor evidence="2 3 4 5">
        <name>adenosylcob(III)alamin</name>
        <dbReference type="ChEBI" id="CHEBI:18408"/>
    </cofactor>
</comment>
<comment type="cofactor">
    <cofactor evidence="2 3 4 5">
        <name>pyridoxal 5'-phosphate</name>
        <dbReference type="ChEBI" id="CHEBI:597326"/>
    </cofactor>
</comment>
<comment type="activity regulation">
    <text evidence="4 5">Increased activity in the presence of dithiothreitol (DTT) in vitro. Inhibited by 1 mM potassium phosphate and potassium chloride. Inhibited by L-alpha-ornithine, D,L-alpha-lysine, L-beta-lysine (50%-60%), L-alpha-lysine (26%) and by delta-amino-n-valeric acid to a lesser extent. Significant decrease in activity is observed in the presence of 0.2 mM p-chloromercuribenzoate, N-ethylmaleimide and also by 2 mM iodoacetate to a lesser extent but not inhibited by arsenite.</text>
</comment>
<comment type="biophysicochemical properties">
    <kinetics>
        <KM evidence="2 4 5">44.5 uM for D-ornithine</KM>
        <KM evidence="2 4 5">0.43 uM for adenosylcobalamin</KM>
        <KM evidence="2 4 5">1.5 uM for pyridoxal phosphate</KM>
        <text>kcat is 6.3 sec(-1). Values are measured for recombinant S and E components expressed together in E.coli to overcome the presence of corrinoids in native system.</text>
    </kinetics>
    <phDependence>
        <text evidence="2 4 5">Optimum pH is 9.0 or between 8.5-8.7 (with Tris-HCl buffer). Half-maximal activity is observed at pH 7.4 and 9.7.</text>
    </phDependence>
    <temperatureDependence>
        <text evidence="2 4 5">Optimum temperature is 37 degrees Celsius for native enzyme. Displays half-maximal activity at 23 degrees Celsius and 49 degrees Celsius. Rapidly inactivated at temperatures above 45 degrees Celsius. Loses more than 35% and 30% of its activity when stored at -20 degrees Celsius for 1 month and at 4 degrees Celsius for 48 hours, respectively.</text>
    </temperatureDependence>
</comment>
<comment type="subunit">
    <text evidence="2 3 5">Heterotetramer of 2 alpha (OraS) and 2 beta (OraE) subunits.</text>
</comment>
<organism>
    <name type="scientific">Acetoanaerobium sticklandii (strain ATCC 12662 / DSM 519 / JCM 1433 / CCUG 9281 / NCIMB 10654 / HF)</name>
    <name type="common">Clostridium sticklandii</name>
    <dbReference type="NCBI Taxonomy" id="499177"/>
    <lineage>
        <taxon>Bacteria</taxon>
        <taxon>Bacillati</taxon>
        <taxon>Bacillota</taxon>
        <taxon>Clostridia</taxon>
        <taxon>Peptostreptococcales</taxon>
        <taxon>Filifactoraceae</taxon>
        <taxon>Acetoanaerobium</taxon>
    </lineage>
</organism>
<proteinExistence type="evidence at protein level"/>
<protein>
    <recommendedName>
        <fullName>D-ornithine 4,5-aminomutase subunit beta</fullName>
        <ecNumber evidence="2 4 5">5.4.3.5</ecNumber>
    </recommendedName>
    <alternativeName>
        <fullName evidence="6">D-ornithine aminomutase E component</fullName>
        <shortName>OAM-E</shortName>
    </alternativeName>
</protein>
<evidence type="ECO:0000255" key="1">
    <source>
        <dbReference type="PROSITE-ProRule" id="PRU00666"/>
    </source>
</evidence>
<evidence type="ECO:0000269" key="2">
    <source>
    </source>
</evidence>
<evidence type="ECO:0000269" key="3">
    <source>
    </source>
</evidence>
<evidence type="ECO:0000269" key="4">
    <source>
    </source>
</evidence>
<evidence type="ECO:0000269" key="5">
    <source ref="4"/>
</evidence>
<evidence type="ECO:0000303" key="6">
    <source>
    </source>
</evidence>
<evidence type="ECO:0000305" key="7"/>
<evidence type="ECO:0000312" key="8">
    <source>
        <dbReference type="EMBL" id="AAK72502.1"/>
    </source>
</evidence>
<evidence type="ECO:0000312" key="9">
    <source>
        <dbReference type="PDB" id="3KP0"/>
    </source>
</evidence>
<evidence type="ECO:0007829" key="10">
    <source>
        <dbReference type="PDB" id="3KOW"/>
    </source>
</evidence>
<evidence type="ECO:0007829" key="11">
    <source>
        <dbReference type="PDB" id="3KP1"/>
    </source>
</evidence>
<feature type="chain" id="PRO_0000421805" description="D-ornithine 4,5-aminomutase subunit beta">
    <location>
        <begin position="1"/>
        <end position="740"/>
    </location>
</feature>
<feature type="domain" description="B12-binding" evidence="1">
    <location>
        <begin position="602"/>
        <end position="739"/>
    </location>
</feature>
<feature type="binding site" evidence="3">
    <location>
        <position position="81"/>
    </location>
    <ligand>
        <name>substrate</name>
    </ligand>
</feature>
<feature type="binding site">
    <location>
        <position position="160"/>
    </location>
    <ligand>
        <name>substrate</name>
    </ligand>
</feature>
<feature type="binding site" evidence="3">
    <location>
        <position position="182"/>
    </location>
    <ligand>
        <name>substrate</name>
    </ligand>
</feature>
<feature type="binding site">
    <location>
        <begin position="294"/>
        <end position="296"/>
    </location>
    <ligand>
        <name>substrate</name>
    </ligand>
</feature>
<feature type="binding site" evidence="3">
    <location>
        <begin position="614"/>
        <end position="616"/>
    </location>
    <ligand>
        <name>adenosylcob(III)alamin</name>
        <dbReference type="ChEBI" id="CHEBI:18408"/>
    </ligand>
</feature>
<feature type="binding site" description="axial binding residue" evidence="3">
    <location>
        <position position="615"/>
    </location>
    <ligand>
        <name>adenosylcob(III)alamin</name>
        <dbReference type="ChEBI" id="CHEBI:18408"/>
    </ligand>
    <ligandPart>
        <name>Co</name>
        <dbReference type="ChEBI" id="CHEBI:27638"/>
    </ligandPart>
</feature>
<feature type="binding site" evidence="3">
    <location>
        <begin position="664"/>
        <end position="669"/>
    </location>
    <ligand>
        <name>adenosylcob(III)alamin</name>
        <dbReference type="ChEBI" id="CHEBI:18408"/>
    </ligand>
</feature>
<feature type="binding site">
    <location>
        <position position="700"/>
    </location>
    <ligand>
        <name>adenosylcob(III)alamin</name>
        <dbReference type="ChEBI" id="CHEBI:18408"/>
    </ligand>
</feature>
<feature type="binding site">
    <location>
        <position position="720"/>
    </location>
    <ligand>
        <name>adenosylcob(III)alamin</name>
        <dbReference type="ChEBI" id="CHEBI:18408"/>
    </ligand>
</feature>
<feature type="modified residue" description="N6-(pyridoxal phosphate)lysine" evidence="3">
    <location>
        <position position="626"/>
    </location>
</feature>
<feature type="mutagenesis site" description="Loss of corrinoid-binding ability." evidence="2">
    <original>H</original>
    <variation>G</variation>
    <location>
        <position position="615"/>
    </location>
</feature>
<feature type="sequence conflict" description="In Ref. 1; AA sequence." evidence="7" ref="1">
    <original>Y</original>
    <variation>T</variation>
    <location>
        <position position="25"/>
    </location>
</feature>
<feature type="sequence conflict" description="In Ref. 1; AAK72502." evidence="7" ref="1">
    <original>G</original>
    <variation>GIDG</variation>
    <location>
        <position position="220"/>
    </location>
</feature>
<feature type="helix" evidence="11">
    <location>
        <begin position="15"/>
        <end position="18"/>
    </location>
</feature>
<feature type="turn" evidence="11">
    <location>
        <begin position="19"/>
        <end position="21"/>
    </location>
</feature>
<feature type="helix" evidence="11">
    <location>
        <begin position="22"/>
        <end position="24"/>
    </location>
</feature>
<feature type="strand" evidence="11">
    <location>
        <begin position="41"/>
        <end position="43"/>
    </location>
</feature>
<feature type="strand" evidence="11">
    <location>
        <begin position="46"/>
        <end position="52"/>
    </location>
</feature>
<feature type="helix" evidence="11">
    <location>
        <begin position="62"/>
        <end position="67"/>
    </location>
</feature>
<feature type="strand" evidence="11">
    <location>
        <begin position="73"/>
        <end position="81"/>
    </location>
</feature>
<feature type="helix" evidence="11">
    <location>
        <begin position="87"/>
        <end position="99"/>
    </location>
</feature>
<feature type="strand" evidence="11">
    <location>
        <begin position="104"/>
        <end position="106"/>
    </location>
</feature>
<feature type="helix" evidence="11">
    <location>
        <begin position="113"/>
        <end position="115"/>
    </location>
</feature>
<feature type="strand" evidence="11">
    <location>
        <begin position="127"/>
        <end position="130"/>
    </location>
</feature>
<feature type="helix" evidence="11">
    <location>
        <begin position="134"/>
        <end position="151"/>
    </location>
</feature>
<feature type="strand" evidence="11">
    <location>
        <begin position="156"/>
        <end position="160"/>
    </location>
</feature>
<feature type="helix" evidence="11">
    <location>
        <begin position="166"/>
        <end position="176"/>
    </location>
</feature>
<feature type="strand" evidence="11">
    <location>
        <begin position="180"/>
        <end position="182"/>
    </location>
</feature>
<feature type="helix" evidence="11">
    <location>
        <begin position="185"/>
        <end position="192"/>
    </location>
</feature>
<feature type="helix" evidence="11">
    <location>
        <begin position="196"/>
        <end position="212"/>
    </location>
</feature>
<feature type="strand" evidence="11">
    <location>
        <begin position="216"/>
        <end position="218"/>
    </location>
</feature>
<feature type="helix" evidence="11">
    <location>
        <begin position="222"/>
        <end position="227"/>
    </location>
</feature>
<feature type="strand" evidence="10">
    <location>
        <begin position="228"/>
        <end position="230"/>
    </location>
</feature>
<feature type="helix" evidence="11">
    <location>
        <begin position="231"/>
        <end position="233"/>
    </location>
</feature>
<feature type="helix" evidence="11">
    <location>
        <begin position="235"/>
        <end position="252"/>
    </location>
</feature>
<feature type="helix" evidence="11">
    <location>
        <begin position="256"/>
        <end position="258"/>
    </location>
</feature>
<feature type="strand" evidence="11">
    <location>
        <begin position="259"/>
        <end position="263"/>
    </location>
</feature>
<feature type="helix" evidence="11">
    <location>
        <begin position="273"/>
        <end position="287"/>
    </location>
</feature>
<feature type="turn" evidence="11">
    <location>
        <begin position="288"/>
        <end position="290"/>
    </location>
</feature>
<feature type="strand" evidence="11">
    <location>
        <begin position="291"/>
        <end position="295"/>
    </location>
</feature>
<feature type="helix" evidence="11">
    <location>
        <begin position="306"/>
        <end position="322"/>
    </location>
</feature>
<feature type="strand" evidence="11">
    <location>
        <begin position="326"/>
        <end position="328"/>
    </location>
</feature>
<feature type="turn" evidence="11">
    <location>
        <begin position="333"/>
        <end position="337"/>
    </location>
</feature>
<feature type="helix" evidence="11">
    <location>
        <begin position="342"/>
        <end position="358"/>
    </location>
</feature>
<feature type="turn" evidence="11">
    <location>
        <begin position="359"/>
        <end position="361"/>
    </location>
</feature>
<feature type="helix" evidence="11">
    <location>
        <begin position="362"/>
        <end position="364"/>
    </location>
</feature>
<feature type="strand" evidence="11">
    <location>
        <begin position="366"/>
        <end position="368"/>
    </location>
</feature>
<feature type="strand" evidence="10">
    <location>
        <begin position="370"/>
        <end position="372"/>
    </location>
</feature>
<feature type="helix" evidence="11">
    <location>
        <begin position="373"/>
        <end position="394"/>
    </location>
</feature>
<feature type="helix" evidence="11">
    <location>
        <begin position="398"/>
        <end position="403"/>
    </location>
</feature>
<feature type="turn" evidence="11">
    <location>
        <begin position="430"/>
        <end position="432"/>
    </location>
</feature>
<feature type="strand" evidence="11">
    <location>
        <begin position="445"/>
        <end position="447"/>
    </location>
</feature>
<feature type="helix" evidence="11">
    <location>
        <begin position="455"/>
        <end position="458"/>
    </location>
</feature>
<feature type="helix" evidence="11">
    <location>
        <begin position="459"/>
        <end position="461"/>
    </location>
</feature>
<feature type="helix" evidence="11">
    <location>
        <begin position="465"/>
        <end position="469"/>
    </location>
</feature>
<feature type="turn" evidence="11">
    <location>
        <begin position="473"/>
        <end position="475"/>
    </location>
</feature>
<feature type="helix" evidence="11">
    <location>
        <begin position="477"/>
        <end position="479"/>
    </location>
</feature>
<feature type="strand" evidence="11">
    <location>
        <begin position="488"/>
        <end position="491"/>
    </location>
</feature>
<feature type="helix" evidence="11">
    <location>
        <begin position="492"/>
        <end position="498"/>
    </location>
</feature>
<feature type="helix" evidence="11">
    <location>
        <begin position="499"/>
        <end position="502"/>
    </location>
</feature>
<feature type="strand" evidence="11">
    <location>
        <begin position="512"/>
        <end position="514"/>
    </location>
</feature>
<feature type="strand" evidence="11">
    <location>
        <begin position="519"/>
        <end position="528"/>
    </location>
</feature>
<feature type="helix" evidence="11">
    <location>
        <begin position="530"/>
        <end position="543"/>
    </location>
</feature>
<feature type="strand" evidence="11">
    <location>
        <begin position="547"/>
        <end position="558"/>
    </location>
</feature>
<feature type="turn" evidence="11">
    <location>
        <begin position="559"/>
        <end position="561"/>
    </location>
</feature>
<feature type="strand" evidence="11">
    <location>
        <begin position="562"/>
        <end position="570"/>
    </location>
</feature>
<feature type="helix" evidence="11">
    <location>
        <begin position="577"/>
        <end position="579"/>
    </location>
</feature>
<feature type="helix" evidence="11">
    <location>
        <begin position="591"/>
        <end position="600"/>
    </location>
</feature>
<feature type="strand" evidence="11">
    <location>
        <begin position="604"/>
        <end position="610"/>
    </location>
</feature>
<feature type="helix" evidence="11">
    <location>
        <begin position="617"/>
        <end position="621"/>
    </location>
</feature>
<feature type="turn" evidence="11">
    <location>
        <begin position="625"/>
        <end position="628"/>
    </location>
</feature>
<feature type="helix" evidence="11">
    <location>
        <begin position="630"/>
        <end position="633"/>
    </location>
</feature>
<feature type="strand" evidence="11">
    <location>
        <begin position="636"/>
        <end position="639"/>
    </location>
</feature>
<feature type="strand" evidence="11">
    <location>
        <begin position="642"/>
        <end position="644"/>
    </location>
</feature>
<feature type="helix" evidence="11">
    <location>
        <begin position="646"/>
        <end position="655"/>
    </location>
</feature>
<feature type="strand" evidence="11">
    <location>
        <begin position="659"/>
        <end position="664"/>
    </location>
</feature>
<feature type="helix" evidence="11">
    <location>
        <begin position="669"/>
        <end position="671"/>
    </location>
</feature>
<feature type="helix" evidence="11">
    <location>
        <begin position="672"/>
        <end position="686"/>
    </location>
</feature>
<feature type="turn" evidence="11">
    <location>
        <begin position="690"/>
        <end position="692"/>
    </location>
</feature>
<feature type="strand" evidence="11">
    <location>
        <begin position="693"/>
        <end position="698"/>
    </location>
</feature>
<feature type="helix" evidence="11">
    <location>
        <begin position="704"/>
        <end position="708"/>
    </location>
</feature>
<feature type="turn" evidence="11">
    <location>
        <begin position="709"/>
        <end position="711"/>
    </location>
</feature>
<feature type="strand" evidence="11">
    <location>
        <begin position="713"/>
        <end position="716"/>
    </location>
</feature>
<feature type="helix" evidence="11">
    <location>
        <begin position="722"/>
        <end position="736"/>
    </location>
</feature>
<gene>
    <name type="primary">oraE</name>
    <name type="ordered locus">CLOST_1290</name>
</gene>
<sequence>MEKDLQLRVNEKLDVENILKDLDKYTPKRRGWTWRQPAENLQMGPFIYKDASTPLENSVALPSAKYFGDIDPQPLPVITTEIASGRFEDDIRRMRMAAWHGADHIMVIRTAGQSHYDGLIEGTPQGIGGVPITRKQVRAQRKALDLIEEEVGRPINYHSYVSGVAGPDIAVMFAEEGVNGAHQDPQYNVLYRNINMIRSFIDACESKTIMAWADMAQIDGAHNANATAREAWKVMPELMVQHALNSIFSLKVGMKKSNICLSTVPPTAPPAPSMYLDLPYAVALREMFEGYRMRAQMNTKYMEASTREATVTHVLNLLISKLTRADIQSTITPDEGRNVPWHIYNIEACDTAKQALIGMDGLMDMVQLKREGVLGDTVRELKERAVLFMEEIIEAGGYFNAVEQGFFVDSGYYPERNGDGIARQINGGIGAGTVFERDEDYMAPVTAHFGYNNVKQYDEALVSEPSKLIDGCTLEVPEKIVYIDELDENDNVNVRMEETKEFRHSSMIKPEVEWQADGTVLLTMFLPTSKRVAEFAAIEFAKKMNLEEVEVINREVMQEAEGTRIELKGRVPFSIDINSLVIPPEPEILSEDEIREDIEKTPLKIVAATVGEDEHSVGLREVIDIKHGGIEKYGVEVHYLGTSVPVEKLVDAAIELKADAILASTIISHDDIHYKNMKRIHELAVEKGIRDKIMIGCGGTQVTPEVAVKQGVDAGFGRGSKGIHVATFLVKKRREMREGK</sequence>
<dbReference type="EC" id="5.4.3.5" evidence="2 4 5"/>
<dbReference type="EMBL" id="AY038595">
    <property type="protein sequence ID" value="AAK72502.1"/>
    <property type="molecule type" value="Genomic_DNA"/>
</dbReference>
<dbReference type="EMBL" id="FP565809">
    <property type="protein sequence ID" value="CBH21410.1"/>
    <property type="molecule type" value="Genomic_DNA"/>
</dbReference>
<dbReference type="PDB" id="3KOW">
    <property type="method" value="X-ray"/>
    <property type="resolution" value="2.90 A"/>
    <property type="chains" value="A/B/C/D=1-740"/>
</dbReference>
<dbReference type="PDB" id="3KOX">
    <property type="method" value="X-ray"/>
    <property type="resolution" value="2.40 A"/>
    <property type="chains" value="A/B/C/D=1-740"/>
</dbReference>
<dbReference type="PDB" id="3KOY">
    <property type="method" value="X-ray"/>
    <property type="resolution" value="2.80 A"/>
    <property type="chains" value="A/B/C/D=1-740"/>
</dbReference>
<dbReference type="PDB" id="3KOZ">
    <property type="method" value="X-ray"/>
    <property type="resolution" value="2.80 A"/>
    <property type="chains" value="A/B/C/D=1-740"/>
</dbReference>
<dbReference type="PDB" id="3KP0">
    <property type="method" value="X-ray"/>
    <property type="resolution" value="2.80 A"/>
    <property type="chains" value="A/B/C/D=1-740"/>
</dbReference>
<dbReference type="PDB" id="3KP1">
    <property type="method" value="X-ray"/>
    <property type="resolution" value="2.01 A"/>
    <property type="chains" value="A/B/C/D=1-740"/>
</dbReference>
<dbReference type="PDBsum" id="3KOW"/>
<dbReference type="PDBsum" id="3KOX"/>
<dbReference type="PDBsum" id="3KOY"/>
<dbReference type="PDBsum" id="3KOZ"/>
<dbReference type="PDBsum" id="3KP0"/>
<dbReference type="PDBsum" id="3KP1"/>
<dbReference type="SMR" id="E3PY95"/>
<dbReference type="STRING" id="1511.CLOST_1290"/>
<dbReference type="KEGG" id="cst:CLOST_1290"/>
<dbReference type="eggNOG" id="COG5012">
    <property type="taxonomic scope" value="Bacteria"/>
</dbReference>
<dbReference type="HOGENOM" id="CLU_027795_0_0_9"/>
<dbReference type="BioCyc" id="MetaCyc:MONOMER-12493"/>
<dbReference type="BRENDA" id="5.4.3.5">
    <property type="organism ID" value="1522"/>
</dbReference>
<dbReference type="EvolutionaryTrace" id="E3PY95"/>
<dbReference type="Proteomes" id="UP000007041">
    <property type="component" value="Chromosome"/>
</dbReference>
<dbReference type="GO" id="GO:0031419">
    <property type="term" value="F:cobalamin binding"/>
    <property type="evidence" value="ECO:0007669"/>
    <property type="project" value="UniProtKB-KW"/>
</dbReference>
<dbReference type="GO" id="GO:0047831">
    <property type="term" value="F:D-ornithine 4,5-aminomutase activity"/>
    <property type="evidence" value="ECO:0007669"/>
    <property type="project" value="UniProtKB-EC"/>
</dbReference>
<dbReference type="GO" id="GO:0046872">
    <property type="term" value="F:metal ion binding"/>
    <property type="evidence" value="ECO:0007669"/>
    <property type="project" value="UniProtKB-KW"/>
</dbReference>
<dbReference type="GO" id="GO:0046983">
    <property type="term" value="F:protein dimerization activity"/>
    <property type="evidence" value="ECO:0007669"/>
    <property type="project" value="InterPro"/>
</dbReference>
<dbReference type="Gene3D" id="3.40.50.280">
    <property type="entry name" value="Cobalamin-binding domain"/>
    <property type="match status" value="1"/>
</dbReference>
<dbReference type="Gene3D" id="3.20.20.440">
    <property type="entry name" value="D-Lysine 5,6-aminomutase alpha subunit"/>
    <property type="match status" value="1"/>
</dbReference>
<dbReference type="Gene3D" id="3.30.30.60">
    <property type="entry name" value="D-lysine 5,6-aminomutase beta subunit KamE, N-terminal domain"/>
    <property type="match status" value="1"/>
</dbReference>
<dbReference type="InterPro" id="IPR016176">
    <property type="entry name" value="Cbl-dep_enz_cat"/>
</dbReference>
<dbReference type="InterPro" id="IPR006158">
    <property type="entry name" value="Cobalamin-bd"/>
</dbReference>
<dbReference type="InterPro" id="IPR036724">
    <property type="entry name" value="Cobalamin-bd_sf"/>
</dbReference>
<dbReference type="InterPro" id="IPR028991">
    <property type="entry name" value="KamE_N"/>
</dbReference>
<dbReference type="InterPro" id="IPR036843">
    <property type="entry name" value="KamE_N_sf"/>
</dbReference>
<dbReference type="InterPro" id="IPR015130">
    <property type="entry name" value="Lys-AminoMut_A"/>
</dbReference>
<dbReference type="InterPro" id="IPR037086">
    <property type="entry name" value="Lys-AminoMut_asu_sf"/>
</dbReference>
<dbReference type="InterPro" id="IPR049834">
    <property type="entry name" value="OraE-like"/>
</dbReference>
<dbReference type="NCBIfam" id="NF040743">
    <property type="entry name" value="ornith_mutase_E"/>
    <property type="match status" value="1"/>
</dbReference>
<dbReference type="Pfam" id="PF02310">
    <property type="entry name" value="B12-binding"/>
    <property type="match status" value="1"/>
</dbReference>
<dbReference type="Pfam" id="PF09043">
    <property type="entry name" value="Lys-AminoMut_A"/>
    <property type="match status" value="1"/>
</dbReference>
<dbReference type="Pfam" id="PF16554">
    <property type="entry name" value="OAM_dimer"/>
    <property type="match status" value="1"/>
</dbReference>
<dbReference type="SUPFAM" id="SSF52242">
    <property type="entry name" value="Cobalamin (vitamin B12)-binding domain"/>
    <property type="match status" value="1"/>
</dbReference>
<dbReference type="SUPFAM" id="SSF51703">
    <property type="entry name" value="Cobalamin (vitamin B12)-dependent enzymes"/>
    <property type="match status" value="1"/>
</dbReference>
<dbReference type="PROSITE" id="PS51332">
    <property type="entry name" value="B12_BINDING"/>
    <property type="match status" value="1"/>
</dbReference>
<name>OAME_ACESD</name>
<keyword id="KW-0002">3D-structure</keyword>
<keyword id="KW-0846">Cobalamin</keyword>
<keyword id="KW-0170">Cobalt</keyword>
<keyword id="KW-0903">Direct protein sequencing</keyword>
<keyword id="KW-0413">Isomerase</keyword>
<keyword id="KW-0479">Metal-binding</keyword>
<keyword id="KW-0663">Pyridoxal phosphate</keyword>
<keyword id="KW-1185">Reference proteome</keyword>
<accession>E3PY95</accession>
<accession>Q8VPJ5</accession>
<reference evidence="7 8" key="1">
    <citation type="journal article" date="2001" name="J. Biol. Chem.">
        <title>Cloning, sequencing, heterologous expression, purification, and characterization of adenosylcobalamin-dependent D-ornithine aminomutase from Clostridium sticklandii.</title>
        <authorList>
            <person name="Chen H.P."/>
            <person name="Wu S.H."/>
            <person name="Lin Y.L."/>
            <person name="Chen C.M."/>
            <person name="Tsay S.S."/>
        </authorList>
    </citation>
    <scope>NUCLEOTIDE SEQUENCE [GENOMIC DNA]</scope>
    <scope>PROTEIN SEQUENCE OF 1-26</scope>
    <scope>FUNCTION</scope>
    <scope>CATALYTIC ACTIVITY</scope>
    <scope>COFACTOR</scope>
    <scope>BIOPHYSICOCHEMICAL PROPERTIES</scope>
    <scope>SUBUNIT</scope>
    <scope>MUTAGENESIS OF HIS-615</scope>
    <source>
        <strain evidence="2">ATCC 12662 / DSM 519 / JCM 1433 / CCUG 9281 / NCIMB 10654 / HF</strain>
    </source>
</reference>
<reference key="2">
    <citation type="journal article" date="2010" name="BMC Genomics">
        <title>Clostridium sticklandii, a specialist in amino acid degradation:revisiting its metabolism through its genome sequence.</title>
        <authorList>
            <person name="Fonknechten N."/>
            <person name="Chaussonnerie S."/>
            <person name="Tricot S."/>
            <person name="Lajus A."/>
            <person name="Andreesen J.R."/>
            <person name="Perchat N."/>
            <person name="Pelletier E."/>
            <person name="Gouyvenoux M."/>
            <person name="Barbe V."/>
            <person name="Salanoubat M."/>
            <person name="Le Paslier D."/>
            <person name="Weissenbach J."/>
            <person name="Cohen G.N."/>
            <person name="Kreimeyer A."/>
        </authorList>
    </citation>
    <scope>NUCLEOTIDE SEQUENCE [LARGE SCALE GENOMIC DNA]</scope>
    <source>
        <strain>ATCC 12662 / DSM 519 / JCM 1433 / CCUG 9281 / NCIMB 10654 / HF</strain>
    </source>
</reference>
<reference evidence="7" key="3">
    <citation type="journal article" date="1973" name="Biochemistry">
        <title>Purification and properties of a pyridoxal phosphate and coenzyme B 12 dependent D-ornithine 5,4-aminomutase.</title>
        <authorList>
            <person name="Somack R."/>
            <person name="Costilow R.N."/>
        </authorList>
    </citation>
    <scope>FUNCTION</scope>
    <scope>CATALYTIC ACTIVITY</scope>
    <scope>COFACTOR</scope>
    <scope>ACTIVITY REGULATION</scope>
    <scope>SUBSTRATE SPECIFICITY</scope>
    <scope>BIOPHYSICOCHEMICAL PROPERTIES</scope>
    <source>
        <strain evidence="4">ATCC 12662 / DSM 519 / JCM 1433 / CCUG 9281 / NCIMB 10654 / HF</strain>
    </source>
</reference>
<reference evidence="7" key="4">
    <citation type="book" date="1982" name="B12">
        <title>Amino mutases.</title>
        <editorList>
            <person name="Dolphin D."/>
        </editorList>
        <authorList>
            <person name="Baker J.J."/>
            <person name="Stadtman T.C."/>
        </authorList>
    </citation>
    <scope>FUNCTION</scope>
    <scope>CATALYTIC ACTIVITY</scope>
    <scope>COFACTOR</scope>
    <scope>ACTIVITY REGULATION</scope>
    <scope>SUBSTRATE SPECIFICITY</scope>
    <scope>BIOPHYSICOCHEMICAL PROPERTIES</scope>
    <scope>SUBUNIT</scope>
</reference>
<reference evidence="7 9" key="5">
    <citation type="journal article" date="2010" name="J. Biol. Chem.">
        <title>Large-scale domain dynamics and adenosylcobalamin reorientation orchestrate radical catalysis in ornithine 4,5-aminomutase.</title>
        <authorList>
            <person name="Wolthers K.R."/>
            <person name="Levy C."/>
            <person name="Scrutton N.S."/>
            <person name="Leys D."/>
        </authorList>
    </citation>
    <scope>X-RAY CRYSTALLOGRAPHY (2.01 ANGSTROMS) IN COMPLEXES WITH ORAS SUBUNIT; D-ORNITHINE; PYRIDOXAL PHOSPHATE; 5'-DEOXYADENOSYLCOBALAMIN AND 2,4-DIAMINOBUTYRATE</scope>
    <scope>COFACTOR</scope>
    <scope>SUBUNIT</scope>
    <scope>REACTION MECHANISM</scope>
    <source>
        <strain evidence="3">ATCC 12662 / DSM 519 / JCM 1433 / CCUG 9281 / NCIMB 10654 / HF</strain>
    </source>
</reference>